<name>YABA_BACVZ</name>
<reference key="1">
    <citation type="journal article" date="2007" name="Nat. Biotechnol.">
        <title>Comparative analysis of the complete genome sequence of the plant growth-promoting bacterium Bacillus amyloliquefaciens FZB42.</title>
        <authorList>
            <person name="Chen X.H."/>
            <person name="Koumoutsi A."/>
            <person name="Scholz R."/>
            <person name="Eisenreich A."/>
            <person name="Schneider K."/>
            <person name="Heinemeyer I."/>
            <person name="Morgenstern B."/>
            <person name="Voss B."/>
            <person name="Hess W.R."/>
            <person name="Reva O."/>
            <person name="Junge H."/>
            <person name="Voigt B."/>
            <person name="Jungblut P.R."/>
            <person name="Vater J."/>
            <person name="Suessmuth R."/>
            <person name="Liesegang H."/>
            <person name="Strittmatter A."/>
            <person name="Gottschalk G."/>
            <person name="Borriss R."/>
        </authorList>
    </citation>
    <scope>NUCLEOTIDE SEQUENCE [LARGE SCALE GENOMIC DNA]</scope>
    <source>
        <strain>DSM 23117 / BGSC 10A6 / LMG 26770 / FZB42</strain>
    </source>
</reference>
<protein>
    <recommendedName>
        <fullName evidence="1">Replication initiation control protein YabA</fullName>
    </recommendedName>
</protein>
<keyword id="KW-0963">Cytoplasm</keyword>
<keyword id="KW-0235">DNA replication</keyword>
<keyword id="KW-0236">DNA replication inhibitor</keyword>
<keyword id="KW-0479">Metal-binding</keyword>
<keyword id="KW-0862">Zinc</keyword>
<organism>
    <name type="scientific">Bacillus velezensis (strain DSM 23117 / BGSC 10A6 / LMG 26770 / FZB42)</name>
    <name type="common">Bacillus amyloliquefaciens subsp. plantarum</name>
    <dbReference type="NCBI Taxonomy" id="326423"/>
    <lineage>
        <taxon>Bacteria</taxon>
        <taxon>Bacillati</taxon>
        <taxon>Bacillota</taxon>
        <taxon>Bacilli</taxon>
        <taxon>Bacillales</taxon>
        <taxon>Bacillaceae</taxon>
        <taxon>Bacillus</taxon>
        <taxon>Bacillus amyloliquefaciens group</taxon>
    </lineage>
</organism>
<accession>A7Z0F6</accession>
<sequence length="119" mass="13998">MDKKELFDTVINLEEQIGSLYRQLGDLKQHIGEMIEENHHLQLENKHLRKRLDDTTEQIEKFKADQKETKTQKAEQSDIGEGYDNLARLYQEGFHICNVHYGSVRKGDCLFCLSFLNKK</sequence>
<evidence type="ECO:0000255" key="1">
    <source>
        <dbReference type="HAMAP-Rule" id="MF_01159"/>
    </source>
</evidence>
<dbReference type="EMBL" id="CP000560">
    <property type="protein sequence ID" value="ABS72482.1"/>
    <property type="molecule type" value="Genomic_DNA"/>
</dbReference>
<dbReference type="RefSeq" id="WP_004264720.1">
    <property type="nucleotide sequence ID" value="NC_009725.2"/>
</dbReference>
<dbReference type="SMR" id="A7Z0F6"/>
<dbReference type="GeneID" id="93079180"/>
<dbReference type="KEGG" id="bay:RBAM_000420"/>
<dbReference type="HOGENOM" id="CLU_157169_0_0_9"/>
<dbReference type="Proteomes" id="UP000001120">
    <property type="component" value="Chromosome"/>
</dbReference>
<dbReference type="GO" id="GO:0009295">
    <property type="term" value="C:nucleoid"/>
    <property type="evidence" value="ECO:0007669"/>
    <property type="project" value="UniProtKB-SubCell"/>
</dbReference>
<dbReference type="GO" id="GO:0006260">
    <property type="term" value="P:DNA replication"/>
    <property type="evidence" value="ECO:0007669"/>
    <property type="project" value="UniProtKB-UniRule"/>
</dbReference>
<dbReference type="HAMAP" id="MF_01159">
    <property type="entry name" value="YabA"/>
    <property type="match status" value="1"/>
</dbReference>
<dbReference type="InterPro" id="IPR010377">
    <property type="entry name" value="YabA"/>
</dbReference>
<dbReference type="NCBIfam" id="NF009644">
    <property type="entry name" value="PRK13169.1-5"/>
    <property type="match status" value="1"/>
</dbReference>
<dbReference type="Pfam" id="PF06156">
    <property type="entry name" value="YabA"/>
    <property type="match status" value="1"/>
</dbReference>
<dbReference type="PIRSF" id="PIRSF021439">
    <property type="entry name" value="DUF972"/>
    <property type="match status" value="1"/>
</dbReference>
<feature type="chain" id="PRO_1000065574" description="Replication initiation control protein YabA">
    <location>
        <begin position="1"/>
        <end position="119"/>
    </location>
</feature>
<feature type="binding site" evidence="1">
    <location>
        <position position="95"/>
    </location>
    <ligand>
        <name>Zn(2+)</name>
        <dbReference type="ChEBI" id="CHEBI:29105"/>
    </ligand>
</feature>
<feature type="binding site" evidence="1">
    <location>
        <position position="97"/>
    </location>
    <ligand>
        <name>Zn(2+)</name>
        <dbReference type="ChEBI" id="CHEBI:29105"/>
    </ligand>
</feature>
<feature type="binding site" evidence="1">
    <location>
        <position position="109"/>
    </location>
    <ligand>
        <name>Zn(2+)</name>
        <dbReference type="ChEBI" id="CHEBI:29105"/>
    </ligand>
</feature>
<feature type="binding site" evidence="1">
    <location>
        <position position="112"/>
    </location>
    <ligand>
        <name>Zn(2+)</name>
        <dbReference type="ChEBI" id="CHEBI:29105"/>
    </ligand>
</feature>
<proteinExistence type="inferred from homology"/>
<comment type="function">
    <text evidence="1">Involved in control of chromosome replication initiation. Inhibits the cooperative binding of DnaA to the oriC region, thus negatively regulating initiation of chromosome replication. Inhibits the ability of DnaA-ATP to form a helix on DNA; does not disassemble preformed DnaA-DNA helices. Decreases the residence time of DnaA on the chromosome at its binding sites (oriC, replication forks and promoter-binding sites). Tethers DnaA to the replication machinery via the DNA polymerase beta sliding clamp subunit (dnaN). Associates with oriC and other DnaA targets on the chromosome in a DnaA-dependent manner.</text>
</comment>
<comment type="cofactor">
    <cofactor evidence="1">
        <name>Zn(2+)</name>
        <dbReference type="ChEBI" id="CHEBI:29105"/>
    </cofactor>
    <text evidence="1">Binds 1 zinc ion per subunit.</text>
</comment>
<comment type="subunit">
    <text evidence="1">Homotetramer. Interacts with both DnaA and DnaN, acting as a bridge between these two proteins.</text>
</comment>
<comment type="subcellular location">
    <subcellularLocation>
        <location evidence="1">Cytoplasm</location>
        <location evidence="1">Nucleoid</location>
    </subcellularLocation>
    <text evidence="1">Localizes in tight foci, which correspond to the replisome at mid-cell throughout the cell cycle.</text>
</comment>
<comment type="similarity">
    <text evidence="1">Belongs to the YabA family.</text>
</comment>
<gene>
    <name evidence="1" type="primary">yabA</name>
    <name type="ordered locus">RBAM_000420</name>
</gene>